<reference key="1">
    <citation type="journal article" date="2011" name="Nature">
        <title>A high-resolution map of human evolutionary constraint using 29 mammals.</title>
        <authorList>
            <person name="Lindblad-Toh K."/>
            <person name="Garber M."/>
            <person name="Zuk O."/>
            <person name="Lin M.F."/>
            <person name="Parker B.J."/>
            <person name="Washietl S."/>
            <person name="Kheradpour P."/>
            <person name="Ernst J."/>
            <person name="Jordan G."/>
            <person name="Mauceli E."/>
            <person name="Ward L.D."/>
            <person name="Lowe C.B."/>
            <person name="Holloway A.K."/>
            <person name="Clamp M."/>
            <person name="Gnerre S."/>
            <person name="Alfoldi J."/>
            <person name="Beal K."/>
            <person name="Chang J."/>
            <person name="Clawson H."/>
            <person name="Cuff J."/>
            <person name="Di Palma F."/>
            <person name="Fitzgerald S."/>
            <person name="Flicek P."/>
            <person name="Guttman M."/>
            <person name="Hubisz M.J."/>
            <person name="Jaffe D.B."/>
            <person name="Jungreis I."/>
            <person name="Kent W.J."/>
            <person name="Kostka D."/>
            <person name="Lara M."/>
            <person name="Martins A.L."/>
            <person name="Massingham T."/>
            <person name="Moltke I."/>
            <person name="Raney B.J."/>
            <person name="Rasmussen M.D."/>
            <person name="Robinson J."/>
            <person name="Stark A."/>
            <person name="Vilella A.J."/>
            <person name="Wen J."/>
            <person name="Xie X."/>
            <person name="Zody M.C."/>
            <person name="Baldwin J."/>
            <person name="Bloom T."/>
            <person name="Chin C.W."/>
            <person name="Heiman D."/>
            <person name="Nicol R."/>
            <person name="Nusbaum C."/>
            <person name="Young S."/>
            <person name="Wilkinson J."/>
            <person name="Worley K.C."/>
            <person name="Kovar C.L."/>
            <person name="Muzny D.M."/>
            <person name="Gibbs R.A."/>
            <person name="Cree A."/>
            <person name="Dihn H.H."/>
            <person name="Fowler G."/>
            <person name="Jhangiani S."/>
            <person name="Joshi V."/>
            <person name="Lee S."/>
            <person name="Lewis L.R."/>
            <person name="Nazareth L.V."/>
            <person name="Okwuonu G."/>
            <person name="Santibanez J."/>
            <person name="Warren W.C."/>
            <person name="Mardis E.R."/>
            <person name="Weinstock G.M."/>
            <person name="Wilson R.K."/>
            <person name="Delehaunty K."/>
            <person name="Dooling D."/>
            <person name="Fronik C."/>
            <person name="Fulton L."/>
            <person name="Fulton B."/>
            <person name="Graves T."/>
            <person name="Minx P."/>
            <person name="Sodergren E."/>
            <person name="Birney E."/>
            <person name="Margulies E.H."/>
            <person name="Herrero J."/>
            <person name="Green E.D."/>
            <person name="Haussler D."/>
            <person name="Siepel A."/>
            <person name="Goldman N."/>
            <person name="Pollard K.S."/>
            <person name="Pedersen J.S."/>
            <person name="Lander E.S."/>
            <person name="Kellis M."/>
        </authorList>
    </citation>
    <scope>NUCLEOTIDE SEQUENCE [LARGE SCALE GENOMIC DNA]</scope>
    <source>
        <strain>Thorbecke</strain>
    </source>
</reference>
<reference evidence="17 18" key="2">
    <citation type="journal article" date="2015" name="Nature">
        <title>Structural basis for stop codon recognition in eukaryotes.</title>
        <authorList>
            <person name="Brown A."/>
            <person name="Shao S."/>
            <person name="Murray J."/>
            <person name="Hegde R.S."/>
            <person name="Ramakrishnan V."/>
        </authorList>
    </citation>
    <scope>STRUCTURE BY ELECTRON MICROSCOPY (3.45 ANGSTROMS) OF RIBOSOME</scope>
    <scope>FUNCTION</scope>
    <scope>SUBCELLULAR LOCATION</scope>
    <scope>SUBUNIT</scope>
</reference>
<reference evidence="19 20" key="3">
    <citation type="journal article" date="2016" name="Cell">
        <title>Decoding mammalian ribosome-mRNA states by translational GTPase complexes.</title>
        <authorList>
            <person name="Shao S."/>
            <person name="Murray J."/>
            <person name="Brown A."/>
            <person name="Taunton J."/>
            <person name="Ramakrishnan V."/>
            <person name="Hegde R.S."/>
        </authorList>
    </citation>
    <scope>STRUCTURE BY ELECTRON MICROSCOPY (3.31 ANGSTROMS) OF RIBOSOME</scope>
    <scope>FUNCTION</scope>
    <scope>SUBCELLULAR LOCATION</scope>
    <scope>SUBUNIT</scope>
</reference>
<reference evidence="21 22" key="4">
    <citation type="journal article" date="2018" name="Elife">
        <title>Dual tRNA mimicry in the Cricket paralysis virus IRES uncovers an unexpected similarity with the Hepatitis C Virus IRES.</title>
        <authorList>
            <person name="Pisareva V.P."/>
            <person name="Pisarev A.V."/>
            <person name="Fernandez I.S."/>
        </authorList>
    </citation>
    <scope>STRUCTURE BY ELECTRON MICROSCOPY (3.20 ANGSTROMS) OF RIBOSOME</scope>
    <scope>SUBCELLULAR LOCATION</scope>
    <scope>SUBUNIT</scope>
</reference>
<reference evidence="25 26" key="5">
    <citation type="journal article" date="2018" name="Elife">
        <title>Structures of translationally inactive mammalian ribosomes.</title>
        <authorList>
            <person name="Brown A."/>
            <person name="Baird M.R."/>
            <person name="Yip M.C."/>
            <person name="Murray J."/>
            <person name="Shao S."/>
        </authorList>
    </citation>
    <scope>STRUCTURE BY ELECTRON MICROSCOPY (3.30 ANGSTROMS) OF RIBOSOME</scope>
    <scope>SUBCELLULAR LOCATION</scope>
    <scope>SUBUNIT</scope>
</reference>
<reference evidence="23 24" key="6">
    <citation type="journal article" date="2018" name="Mol. Cell">
        <title>ZNF598 is a quality control sensor of collided ribosomes.</title>
        <authorList>
            <person name="Juszkiewicz S."/>
            <person name="Chandrasekaran V."/>
            <person name="Lin Z."/>
            <person name="Kraatz S."/>
            <person name="Ramakrishnan V."/>
            <person name="Hegde R.S."/>
        </authorList>
    </citation>
    <scope>STRUCTURE BY ELECTRON MICROSCOPY (3.80 ANGSTROMS) OF RIBOSOME</scope>
    <scope>SUBCELLULAR LOCATION</scope>
    <scope>SUBUNIT</scope>
</reference>
<reference evidence="29 30" key="7">
    <citation type="journal article" date="2019" name="Elife">
        <title>Structural and mutational analysis of the ribosome-arresting human XBP1u.</title>
        <authorList>
            <person name="Shanmuganathan V."/>
            <person name="Schiller N."/>
            <person name="Magoulopoulou A."/>
            <person name="Cheng J."/>
            <person name="Braunger K."/>
            <person name="Cymer F."/>
            <person name="Berninghausen O."/>
            <person name="Beatrix B."/>
            <person name="Kohno K."/>
            <person name="von Heijne G."/>
            <person name="Beckmann R."/>
        </authorList>
    </citation>
    <scope>STRUCTURE BY ELECTRON MICROSCOPY (3.00 ANGSTROMS) OF RIBOSOME</scope>
    <scope>SUBCELLULAR LOCATION</scope>
    <scope>SUBUNIT</scope>
</reference>
<reference evidence="27 28" key="8">
    <citation type="journal article" date="2019" name="EMBO J.">
        <title>The Israeli acute paralysis virus IRES captures host ribosomes by mimicking a ribosomal state with hybrid tRNAs.</title>
        <authorList>
            <person name="Acosta-Reyes F."/>
            <person name="Neupane R."/>
            <person name="Frank J."/>
            <person name="Fernandez I.S."/>
        </authorList>
    </citation>
    <scope>STRUCTURE BY ELECTRON MICROSCOPY (3.10 ANGSTROMS) OF RIBOSOME</scope>
    <scope>SUBUNIT</scope>
    <scope>SUBCELLULAR LOCATION</scope>
</reference>
<reference evidence="31" key="9">
    <citation type="journal article" date="2019" name="Nat. Struct. Mol. Biol.">
        <title>Mechanism of ribosome stalling during translation of a poly(A) tail.</title>
        <authorList>
            <person name="Chandrasekaran V."/>
            <person name="Juszkiewicz S."/>
            <person name="Choi J."/>
            <person name="Puglisi J.D."/>
            <person name="Brown A."/>
            <person name="Shao S."/>
            <person name="Ramakrishnan V."/>
            <person name="Hegde R.S."/>
        </authorList>
    </citation>
    <scope>STRUCTURE BY ELECTRON MICROSCOPY (2.80 ANGSTROMS) OF RIBOSOME</scope>
    <scope>SUBCELLULAR LOCATION</scope>
    <scope>SUBUNIT</scope>
</reference>
<reference evidence="32 33" key="10">
    <citation type="journal article" date="2020" name="Cell Rep.">
        <title>The Halastavi arva virus intergenic region IRES promotes translation by the simplest possible initiation mechanism.</title>
        <authorList>
            <person name="Abaeva I.S."/>
            <person name="Vicens Q."/>
            <person name="Bochler A."/>
            <person name="Soufari H."/>
            <person name="Simonetti A."/>
            <person name="Pestova T.V."/>
            <person name="Hashem Y."/>
            <person name="Hellen C.U.T."/>
        </authorList>
    </citation>
    <scope>STRUCTURE BY ELECTRON MICROSCOPY (3.49 ANGSTROMS) OF RIBOSOME</scope>
    <scope>SUBCELLULAR LOCATION</scope>
    <scope>SUBUNIT</scope>
</reference>
<reference evidence="35 36" key="11">
    <citation type="journal article" date="2022" name="Mol. Cell">
        <title>Direct epitranscriptomic regulation of mammalian translation initiation through N4-acetylcytidine.</title>
        <authorList>
            <person name="Arango D."/>
            <person name="Sturgill D."/>
            <person name="Yang R."/>
            <person name="Kanai T."/>
            <person name="Bauer P."/>
            <person name="Roy J."/>
            <person name="Wang Z."/>
            <person name="Hosogane M."/>
            <person name="Schiffers S."/>
            <person name="Oberdoerffer S."/>
        </authorList>
    </citation>
    <scope>STRUCTURE BY ELECTRON MICROSCOPY (2.80 ANGSTROMS) OF RIBOSOME</scope>
    <scope>SUBCELLULAR LOCATION</scope>
    <scope>SUBUNIT</scope>
</reference>
<reference evidence="37 38" key="12">
    <citation type="journal article" date="2022" name="Science">
        <title>Structure of the mammalian ribosome as it decodes the selenocysteine UGA codon.</title>
        <authorList>
            <person name="Hilal T."/>
            <person name="Killam B.Y."/>
            <person name="Grozdanovic M."/>
            <person name="Dobosz-Bartoszek M."/>
            <person name="Loerke J."/>
            <person name="Buerger J."/>
            <person name="Mielke T."/>
            <person name="Copeland P.R."/>
            <person name="Simonovic M."/>
            <person name="Spahn C.M.T."/>
        </authorList>
    </citation>
    <scope>STRUCTURE BY ELECTRON MICROSCOPY (2.80 ANGSTROMS) OF RIBOSOME</scope>
    <scope>SUBCELLULAR LOCATION</scope>
    <scope>SUBUNIT</scope>
</reference>
<reference evidence="34" key="13">
    <citation type="journal article" date="2023" name="Nature">
        <title>A molecular network of conserved factors keeps ribosomes dormant in the egg.</title>
        <authorList>
            <person name="Leesch F."/>
            <person name="Lorenzo-Orts L."/>
            <person name="Pribitzer C."/>
            <person name="Grishkovskaya I."/>
            <person name="Roehsner J."/>
            <person name="Chugunova A."/>
            <person name="Matzinger M."/>
            <person name="Roitinger E."/>
            <person name="Belacic K."/>
            <person name="Kandolf S."/>
            <person name="Lin T.Y."/>
            <person name="Mechtler K."/>
            <person name="Meinhart A."/>
            <person name="Haselbach D."/>
            <person name="Pauli A."/>
        </authorList>
    </citation>
    <scope>STRUCTURE BY ELECTRON MICROSCOPY (2.30 ANGSTROMS) OF RIBOSOME</scope>
    <scope>SUBCELLULAR LOCATION</scope>
    <scope>SUBUNIT</scope>
</reference>
<sequence>MVFRRFVEVGRVAYVSFGPHAGKLVAIVDVIDQNRALVDGPCTRVRRQAMPFKCMQLTDFILKFPHSARQKYVRKAWEKADINTKWAATRWAKKIEARERKAKMTDFDRYKVMKAKKMRNRIIKNEVKKLQRAALLKASPKKAPVAKGAVAAAAAAAKVPAKKATAAGKKAAAQKAPAQKAPAQKAAGQKAAQPPKAQKGQKPPAQKAPAPKASGKKA</sequence>
<accession>G1SZ12</accession>
<accession>U3KNW6</accession>
<evidence type="ECO:0000250" key="1">
    <source>
        <dbReference type="UniProtKB" id="P50914"/>
    </source>
</evidence>
<evidence type="ECO:0000250" key="2">
    <source>
        <dbReference type="UniProtKB" id="Q9CR57"/>
    </source>
</evidence>
<evidence type="ECO:0000256" key="3">
    <source>
        <dbReference type="SAM" id="MobiDB-lite"/>
    </source>
</evidence>
<evidence type="ECO:0000269" key="4">
    <source>
    </source>
</evidence>
<evidence type="ECO:0000269" key="5">
    <source>
    </source>
</evidence>
<evidence type="ECO:0000269" key="6">
    <source>
    </source>
</evidence>
<evidence type="ECO:0000269" key="7">
    <source>
    </source>
</evidence>
<evidence type="ECO:0000269" key="8">
    <source>
    </source>
</evidence>
<evidence type="ECO:0000269" key="9">
    <source>
    </source>
</evidence>
<evidence type="ECO:0000269" key="10">
    <source>
    </source>
</evidence>
<evidence type="ECO:0000269" key="11">
    <source>
    </source>
</evidence>
<evidence type="ECO:0000269" key="12">
    <source>
    </source>
</evidence>
<evidence type="ECO:0000269" key="13">
    <source>
    </source>
</evidence>
<evidence type="ECO:0000269" key="14">
    <source>
    </source>
</evidence>
<evidence type="ECO:0000269" key="15">
    <source>
    </source>
</evidence>
<evidence type="ECO:0000305" key="16"/>
<evidence type="ECO:0007744" key="17">
    <source>
        <dbReference type="PDB" id="3JAG"/>
    </source>
</evidence>
<evidence type="ECO:0007744" key="18">
    <source>
        <dbReference type="PDB" id="3JAH"/>
    </source>
</evidence>
<evidence type="ECO:0007744" key="19">
    <source>
        <dbReference type="PDB" id="5LZS"/>
    </source>
</evidence>
<evidence type="ECO:0007744" key="20">
    <source>
        <dbReference type="PDB" id="5LZT"/>
    </source>
</evidence>
<evidence type="ECO:0007744" key="21">
    <source>
        <dbReference type="PDB" id="6D90"/>
    </source>
</evidence>
<evidence type="ECO:0007744" key="22">
    <source>
        <dbReference type="PDB" id="6D9J"/>
    </source>
</evidence>
<evidence type="ECO:0007744" key="23">
    <source>
        <dbReference type="PDB" id="6HCF"/>
    </source>
</evidence>
<evidence type="ECO:0007744" key="24">
    <source>
        <dbReference type="PDB" id="6HCJ"/>
    </source>
</evidence>
<evidence type="ECO:0007744" key="25">
    <source>
        <dbReference type="PDB" id="6MTB"/>
    </source>
</evidence>
<evidence type="ECO:0007744" key="26">
    <source>
        <dbReference type="PDB" id="6MTC"/>
    </source>
</evidence>
<evidence type="ECO:0007744" key="27">
    <source>
        <dbReference type="PDB" id="6P5I"/>
    </source>
</evidence>
<evidence type="ECO:0007744" key="28">
    <source>
        <dbReference type="PDB" id="6P5J"/>
    </source>
</evidence>
<evidence type="ECO:0007744" key="29">
    <source>
        <dbReference type="PDB" id="6R5Q"/>
    </source>
</evidence>
<evidence type="ECO:0007744" key="30">
    <source>
        <dbReference type="PDB" id="6R6G"/>
    </source>
</evidence>
<evidence type="ECO:0007744" key="31">
    <source>
        <dbReference type="PDB" id="6SGC"/>
    </source>
</evidence>
<evidence type="ECO:0007744" key="32">
    <source>
        <dbReference type="PDB" id="6ZVK"/>
    </source>
</evidence>
<evidence type="ECO:0007744" key="33">
    <source>
        <dbReference type="PDB" id="7A01"/>
    </source>
</evidence>
<evidence type="ECO:0007744" key="34">
    <source>
        <dbReference type="PDB" id="7OYD"/>
    </source>
</evidence>
<evidence type="ECO:0007744" key="35">
    <source>
        <dbReference type="PDB" id="7UCJ"/>
    </source>
</evidence>
<evidence type="ECO:0007744" key="36">
    <source>
        <dbReference type="PDB" id="7UCK"/>
    </source>
</evidence>
<evidence type="ECO:0007744" key="37">
    <source>
        <dbReference type="PDB" id="7ZJW"/>
    </source>
</evidence>
<evidence type="ECO:0007744" key="38">
    <source>
        <dbReference type="PDB" id="7ZJX"/>
    </source>
</evidence>
<feature type="initiator methionine" description="Removed" evidence="1">
    <location>
        <position position="1"/>
    </location>
</feature>
<feature type="chain" id="PRO_0000460103" description="Large ribosomal subunit protein eL14">
    <location>
        <begin position="2"/>
        <end position="218"/>
    </location>
</feature>
<feature type="repeat" description="1-1" evidence="1">
    <location>
        <begin position="174"/>
        <end position="178"/>
    </location>
</feature>
<feature type="repeat" description="1-2" evidence="1">
    <location>
        <begin position="179"/>
        <end position="183"/>
    </location>
</feature>
<feature type="repeat" description="1-3" evidence="1">
    <location>
        <begin position="184"/>
        <end position="188"/>
    </location>
</feature>
<feature type="repeat" description="1-4" evidence="1">
    <location>
        <begin position="189"/>
        <end position="193"/>
    </location>
</feature>
<feature type="repeat" description="2-1" evidence="1">
    <location>
        <begin position="196"/>
        <end position="198"/>
    </location>
</feature>
<feature type="repeat" description="2-2" evidence="1">
    <location>
        <begin position="199"/>
        <end position="201"/>
    </location>
</feature>
<feature type="region of interest" description="Disordered" evidence="3">
    <location>
        <begin position="159"/>
        <end position="218"/>
    </location>
</feature>
<feature type="region of interest" description="4 X 5 AA tandem repeats of Q-K-A-[PAS]-X" evidence="1">
    <location>
        <begin position="174"/>
        <end position="193"/>
    </location>
</feature>
<feature type="region of interest" description="2 X 3 AA tandem repeats of K-[GA]-Q" evidence="1">
    <location>
        <begin position="196"/>
        <end position="201"/>
    </location>
</feature>
<feature type="modified residue" description="N6-acetyllysine" evidence="1">
    <location>
        <position position="79"/>
    </location>
</feature>
<feature type="modified residue" description="N6-acetyllysine; alternate" evidence="1">
    <location>
        <position position="85"/>
    </location>
</feature>
<feature type="modified residue" description="N6-succinyllysine; alternate" evidence="2">
    <location>
        <position position="85"/>
    </location>
</feature>
<feature type="modified residue" description="Phosphoserine" evidence="1">
    <location>
        <position position="139"/>
    </location>
</feature>
<feature type="modified residue" description="N6-succinyllysine" evidence="2">
    <location>
        <position position="207"/>
    </location>
</feature>
<feature type="cross-link" description="Glycyl lysine isopeptide (Lys-Gly) (interchain with G-Cter in SUMO2)" evidence="1">
    <location>
        <position position="124"/>
    </location>
</feature>
<gene>
    <name type="primary">RPL14</name>
</gene>
<keyword id="KW-0002">3D-structure</keyword>
<keyword id="KW-0007">Acetylation</keyword>
<keyword id="KW-0963">Cytoplasm</keyword>
<keyword id="KW-1017">Isopeptide bond</keyword>
<keyword id="KW-0597">Phosphoprotein</keyword>
<keyword id="KW-1185">Reference proteome</keyword>
<keyword id="KW-0677">Repeat</keyword>
<keyword id="KW-0687">Ribonucleoprotein</keyword>
<keyword id="KW-0689">Ribosomal protein</keyword>
<keyword id="KW-0832">Ubl conjugation</keyword>
<proteinExistence type="evidence at protein level"/>
<organism>
    <name type="scientific">Oryctolagus cuniculus</name>
    <name type="common">Rabbit</name>
    <dbReference type="NCBI Taxonomy" id="9986"/>
    <lineage>
        <taxon>Eukaryota</taxon>
        <taxon>Metazoa</taxon>
        <taxon>Chordata</taxon>
        <taxon>Craniata</taxon>
        <taxon>Vertebrata</taxon>
        <taxon>Euteleostomi</taxon>
        <taxon>Mammalia</taxon>
        <taxon>Eutheria</taxon>
        <taxon>Euarchontoglires</taxon>
        <taxon>Glires</taxon>
        <taxon>Lagomorpha</taxon>
        <taxon>Leporidae</taxon>
        <taxon>Oryctolagus</taxon>
    </lineage>
</organism>
<comment type="function">
    <text evidence="4 5">Component of the large ribosomal subunit (PubMed:26245381, PubMed:27863242). The ribosome is a large ribonucleoprotein complex responsible for the synthesis of proteins in the cell (PubMed:26245381, PubMed:27863242).</text>
</comment>
<comment type="subunit">
    <text evidence="4 5 6 7 8 9 10 11 12 13 14 15">Component of the large ribosomal subunit.</text>
</comment>
<comment type="subcellular location">
    <subcellularLocation>
        <location evidence="4 5 6 7 8 9 10 11 12 13 14 15">Cytoplasm</location>
    </subcellularLocation>
</comment>
<comment type="similarity">
    <text evidence="16">Belongs to the eukaryotic ribosomal protein eL14 family.</text>
</comment>
<protein>
    <recommendedName>
        <fullName>Large ribosomal subunit protein eL14</fullName>
    </recommendedName>
    <alternativeName>
        <fullName>60S ribosomal protein L14</fullName>
    </alternativeName>
</protein>
<name>RL14_RABIT</name>
<dbReference type="EMBL" id="AAGW02056131">
    <property type="status" value="NOT_ANNOTATED_CDS"/>
    <property type="molecule type" value="Genomic_DNA"/>
</dbReference>
<dbReference type="RefSeq" id="XP_002713132.1">
    <property type="nucleotide sequence ID" value="XM_002713086.3"/>
</dbReference>
<dbReference type="PDB" id="3JAG">
    <property type="method" value="EM"/>
    <property type="resolution" value="3.65 A"/>
    <property type="chains" value="M=2-139"/>
</dbReference>
<dbReference type="PDB" id="3JAH">
    <property type="method" value="EM"/>
    <property type="resolution" value="3.45 A"/>
    <property type="chains" value="M=2-139"/>
</dbReference>
<dbReference type="PDB" id="3JAI">
    <property type="method" value="EM"/>
    <property type="resolution" value="3.65 A"/>
    <property type="chains" value="M=2-139"/>
</dbReference>
<dbReference type="PDB" id="5LZS">
    <property type="method" value="EM"/>
    <property type="resolution" value="3.31 A"/>
    <property type="chains" value="M=1-218"/>
</dbReference>
<dbReference type="PDB" id="5LZT">
    <property type="method" value="EM"/>
    <property type="resolution" value="3.65 A"/>
    <property type="chains" value="M=1-218"/>
</dbReference>
<dbReference type="PDB" id="5LZU">
    <property type="method" value="EM"/>
    <property type="resolution" value="3.75 A"/>
    <property type="chains" value="M=1-218"/>
</dbReference>
<dbReference type="PDB" id="5LZV">
    <property type="method" value="EM"/>
    <property type="resolution" value="3.35 A"/>
    <property type="chains" value="M=1-218"/>
</dbReference>
<dbReference type="PDB" id="5LZW">
    <property type="method" value="EM"/>
    <property type="resolution" value="3.53 A"/>
    <property type="chains" value="M=1-218"/>
</dbReference>
<dbReference type="PDB" id="5LZX">
    <property type="method" value="EM"/>
    <property type="resolution" value="3.67 A"/>
    <property type="chains" value="M=1-218"/>
</dbReference>
<dbReference type="PDB" id="5LZY">
    <property type="method" value="EM"/>
    <property type="resolution" value="3.99 A"/>
    <property type="chains" value="M=1-218"/>
</dbReference>
<dbReference type="PDB" id="5LZZ">
    <property type="method" value="EM"/>
    <property type="resolution" value="3.47 A"/>
    <property type="chains" value="M=1-218"/>
</dbReference>
<dbReference type="PDB" id="6D90">
    <property type="method" value="EM"/>
    <property type="resolution" value="3.20 A"/>
    <property type="chains" value="M=2-218"/>
</dbReference>
<dbReference type="PDB" id="6D9J">
    <property type="method" value="EM"/>
    <property type="resolution" value="3.20 A"/>
    <property type="chains" value="M=2-218"/>
</dbReference>
<dbReference type="PDB" id="6FTG">
    <property type="method" value="EM"/>
    <property type="resolution" value="9.10 A"/>
    <property type="chains" value="M=2-139"/>
</dbReference>
<dbReference type="PDB" id="6FTI">
    <property type="method" value="EM"/>
    <property type="resolution" value="4.20 A"/>
    <property type="chains" value="M=2-139"/>
</dbReference>
<dbReference type="PDB" id="6FTJ">
    <property type="method" value="EM"/>
    <property type="resolution" value="4.70 A"/>
    <property type="chains" value="M=2-139"/>
</dbReference>
<dbReference type="PDB" id="6HCF">
    <property type="method" value="EM"/>
    <property type="resolution" value="3.90 A"/>
    <property type="chains" value="M3=1-218"/>
</dbReference>
<dbReference type="PDB" id="6HCJ">
    <property type="method" value="EM"/>
    <property type="resolution" value="3.80 A"/>
    <property type="chains" value="M3=1-218"/>
</dbReference>
<dbReference type="PDB" id="6HCM">
    <property type="method" value="EM"/>
    <property type="resolution" value="6.80 A"/>
    <property type="chains" value="M3=1-218"/>
</dbReference>
<dbReference type="PDB" id="6HCQ">
    <property type="method" value="EM"/>
    <property type="resolution" value="6.50 A"/>
    <property type="chains" value="M3=1-218"/>
</dbReference>
<dbReference type="PDB" id="6MTB">
    <property type="method" value="EM"/>
    <property type="resolution" value="3.60 A"/>
    <property type="chains" value="M=2-139"/>
</dbReference>
<dbReference type="PDB" id="6MTC">
    <property type="method" value="EM"/>
    <property type="resolution" value="3.40 A"/>
    <property type="chains" value="M=2-139"/>
</dbReference>
<dbReference type="PDB" id="6MTD">
    <property type="method" value="EM"/>
    <property type="resolution" value="3.30 A"/>
    <property type="chains" value="M=2-139"/>
</dbReference>
<dbReference type="PDB" id="6MTE">
    <property type="method" value="EM"/>
    <property type="resolution" value="3.40 A"/>
    <property type="chains" value="M=2-139"/>
</dbReference>
<dbReference type="PDB" id="6P5I">
    <property type="method" value="EM"/>
    <property type="resolution" value="3.10 A"/>
    <property type="chains" value="AM=2-218"/>
</dbReference>
<dbReference type="PDB" id="6P5J">
    <property type="method" value="EM"/>
    <property type="resolution" value="3.10 A"/>
    <property type="chains" value="AM=2-218"/>
</dbReference>
<dbReference type="PDB" id="6P5K">
    <property type="method" value="EM"/>
    <property type="resolution" value="3.10 A"/>
    <property type="chains" value="AM=2-218"/>
</dbReference>
<dbReference type="PDB" id="6P5N">
    <property type="method" value="EM"/>
    <property type="resolution" value="3.20 A"/>
    <property type="chains" value="AM=2-218"/>
</dbReference>
<dbReference type="PDB" id="6R5Q">
    <property type="method" value="EM"/>
    <property type="resolution" value="3.00 A"/>
    <property type="chains" value="M=2-139"/>
</dbReference>
<dbReference type="PDB" id="6R6G">
    <property type="method" value="EM"/>
    <property type="resolution" value="3.70 A"/>
    <property type="chains" value="M=2-139"/>
</dbReference>
<dbReference type="PDB" id="6R6P">
    <property type="method" value="EM"/>
    <property type="resolution" value="3.10 A"/>
    <property type="chains" value="M=2-139"/>
</dbReference>
<dbReference type="PDB" id="6R7Q">
    <property type="method" value="EM"/>
    <property type="resolution" value="3.90 A"/>
    <property type="chains" value="M=2-139"/>
</dbReference>
<dbReference type="PDB" id="6SGC">
    <property type="method" value="EM"/>
    <property type="resolution" value="2.80 A"/>
    <property type="chains" value="M2=1-218"/>
</dbReference>
<dbReference type="PDB" id="6T59">
    <property type="method" value="EM"/>
    <property type="resolution" value="3.11 A"/>
    <property type="chains" value="M3=1-218"/>
</dbReference>
<dbReference type="PDB" id="6ZVK">
    <property type="method" value="EM"/>
    <property type="resolution" value="3.49 A"/>
    <property type="chains" value="Z2=2-139"/>
</dbReference>
<dbReference type="PDB" id="7A01">
    <property type="method" value="EM"/>
    <property type="resolution" value="3.60 A"/>
    <property type="chains" value="02=2-139"/>
</dbReference>
<dbReference type="PDB" id="7MDZ">
    <property type="method" value="EM"/>
    <property type="resolution" value="3.20 A"/>
    <property type="chains" value="M=1-218"/>
</dbReference>
<dbReference type="PDB" id="7NFX">
    <property type="method" value="EM"/>
    <property type="resolution" value="3.20 A"/>
    <property type="chains" value="M=1-218"/>
</dbReference>
<dbReference type="PDB" id="7NWG">
    <property type="method" value="EM"/>
    <property type="resolution" value="3.80 A"/>
    <property type="chains" value="M3=1-218"/>
</dbReference>
<dbReference type="PDB" id="7NWH">
    <property type="method" value="EM"/>
    <property type="resolution" value="4.10 A"/>
    <property type="chains" value="M=1-218"/>
</dbReference>
<dbReference type="PDB" id="7NWI">
    <property type="method" value="EM"/>
    <property type="resolution" value="3.13 A"/>
    <property type="chains" value="M=1-218"/>
</dbReference>
<dbReference type="PDB" id="7O7Y">
    <property type="method" value="EM"/>
    <property type="resolution" value="2.20 A"/>
    <property type="chains" value="BM=1-218"/>
</dbReference>
<dbReference type="PDB" id="7O7Z">
    <property type="method" value="EM"/>
    <property type="resolution" value="2.40 A"/>
    <property type="chains" value="BM=1-218"/>
</dbReference>
<dbReference type="PDB" id="7O80">
    <property type="method" value="EM"/>
    <property type="resolution" value="2.90 A"/>
    <property type="chains" value="BM=1-218"/>
</dbReference>
<dbReference type="PDB" id="7O81">
    <property type="method" value="EM"/>
    <property type="resolution" value="3.10 A"/>
    <property type="chains" value="BM=1-218"/>
</dbReference>
<dbReference type="PDB" id="7OBR">
    <property type="method" value="EM"/>
    <property type="resolution" value="2.80 A"/>
    <property type="chains" value="M=1-218"/>
</dbReference>
<dbReference type="PDB" id="7OYD">
    <property type="method" value="EM"/>
    <property type="resolution" value="2.30 A"/>
    <property type="chains" value="M=1-218"/>
</dbReference>
<dbReference type="PDB" id="7QWQ">
    <property type="method" value="EM"/>
    <property type="resolution" value="2.83 A"/>
    <property type="chains" value="M=1-218"/>
</dbReference>
<dbReference type="PDB" id="7QWR">
    <property type="method" value="EM"/>
    <property type="resolution" value="2.90 A"/>
    <property type="chains" value="M=1-218"/>
</dbReference>
<dbReference type="PDB" id="7QWS">
    <property type="method" value="EM"/>
    <property type="resolution" value="3.40 A"/>
    <property type="chains" value="M=1-218"/>
</dbReference>
<dbReference type="PDB" id="7TM3">
    <property type="method" value="EM"/>
    <property type="resolution" value="3.25 A"/>
    <property type="chains" value="M=1-218"/>
</dbReference>
<dbReference type="PDB" id="7TOQ">
    <property type="method" value="EM"/>
    <property type="resolution" value="3.10 A"/>
    <property type="chains" value="AL14=2-139"/>
</dbReference>
<dbReference type="PDB" id="7TOR">
    <property type="method" value="EM"/>
    <property type="resolution" value="2.90 A"/>
    <property type="chains" value="AL14=2-139"/>
</dbReference>
<dbReference type="PDB" id="7TUT">
    <property type="method" value="EM"/>
    <property type="resolution" value="3.88 A"/>
    <property type="chains" value="M=1-218"/>
</dbReference>
<dbReference type="PDB" id="7UCJ">
    <property type="method" value="EM"/>
    <property type="resolution" value="3.10 A"/>
    <property type="chains" value="M=2-139"/>
</dbReference>
<dbReference type="PDB" id="7UCK">
    <property type="method" value="EM"/>
    <property type="resolution" value="2.80 A"/>
    <property type="chains" value="M=2-139"/>
</dbReference>
<dbReference type="PDB" id="7ZJW">
    <property type="method" value="EM"/>
    <property type="resolution" value="2.80 A"/>
    <property type="chains" value="LP=1-218"/>
</dbReference>
<dbReference type="PDB" id="7ZJX">
    <property type="method" value="EM"/>
    <property type="resolution" value="3.10 A"/>
    <property type="chains" value="LP=1-218"/>
</dbReference>
<dbReference type="PDB" id="8B5L">
    <property type="method" value="EM"/>
    <property type="resolution" value="2.86 A"/>
    <property type="chains" value="M=2-139"/>
</dbReference>
<dbReference type="PDB" id="8B6C">
    <property type="method" value="EM"/>
    <property type="resolution" value="2.79 A"/>
    <property type="chains" value="M=2-139"/>
</dbReference>
<dbReference type="PDB" id="8BHF">
    <property type="method" value="EM"/>
    <property type="resolution" value="3.10 A"/>
    <property type="chains" value="u3=2-139"/>
</dbReference>
<dbReference type="PDB" id="8BPO">
    <property type="method" value="EM"/>
    <property type="resolution" value="2.80 A"/>
    <property type="chains" value="L2=1-218"/>
</dbReference>
<dbReference type="PDB" id="8BTK">
    <property type="method" value="EM"/>
    <property type="resolution" value="3.50 A"/>
    <property type="chains" value="BM=1-218"/>
</dbReference>
<dbReference type="PDB" id="8P2K">
    <property type="method" value="EM"/>
    <property type="resolution" value="2.90 A"/>
    <property type="chains" value="BM=1-218"/>
</dbReference>
<dbReference type="PDB" id="8RJB">
    <property type="method" value="EM"/>
    <property type="resolution" value="2.69 A"/>
    <property type="chains" value="M=1-218"/>
</dbReference>
<dbReference type="PDB" id="8RJC">
    <property type="method" value="EM"/>
    <property type="resolution" value="2.90 A"/>
    <property type="chains" value="M=1-218"/>
</dbReference>
<dbReference type="PDB" id="8RJD">
    <property type="method" value="EM"/>
    <property type="resolution" value="2.79 A"/>
    <property type="chains" value="M=1-218"/>
</dbReference>
<dbReference type="PDB" id="8SCB">
    <property type="method" value="EM"/>
    <property type="resolution" value="2.50 A"/>
    <property type="chains" value="M=1-218"/>
</dbReference>
<dbReference type="PDB" id="8VFT">
    <property type="method" value="EM"/>
    <property type="resolution" value="3.30 A"/>
    <property type="chains" value="M=1-218"/>
</dbReference>
<dbReference type="PDB" id="9BDL">
    <property type="method" value="EM"/>
    <property type="resolution" value="2.80 A"/>
    <property type="chains" value="AL14=2-139"/>
</dbReference>
<dbReference type="PDB" id="9BDN">
    <property type="method" value="EM"/>
    <property type="resolution" value="3.10 A"/>
    <property type="chains" value="AL14=2-139"/>
</dbReference>
<dbReference type="PDB" id="9BDP">
    <property type="method" value="EM"/>
    <property type="resolution" value="3.70 A"/>
    <property type="chains" value="AL14=2-139"/>
</dbReference>
<dbReference type="PDB" id="9F1B">
    <property type="method" value="EM"/>
    <property type="resolution" value="3.01 A"/>
    <property type="chains" value="BM=1-218"/>
</dbReference>
<dbReference type="PDB" id="9F1C">
    <property type="method" value="EM"/>
    <property type="resolution" value="3.78 A"/>
    <property type="chains" value="BM=1-218"/>
</dbReference>
<dbReference type="PDB" id="9F1D">
    <property type="method" value="EM"/>
    <property type="resolution" value="3.26 A"/>
    <property type="chains" value="BM=1-218"/>
</dbReference>
<dbReference type="PDBsum" id="3JAG"/>
<dbReference type="PDBsum" id="3JAH"/>
<dbReference type="PDBsum" id="3JAI"/>
<dbReference type="PDBsum" id="5LZS"/>
<dbReference type="PDBsum" id="5LZT"/>
<dbReference type="PDBsum" id="5LZU"/>
<dbReference type="PDBsum" id="5LZV"/>
<dbReference type="PDBsum" id="5LZW"/>
<dbReference type="PDBsum" id="5LZX"/>
<dbReference type="PDBsum" id="5LZY"/>
<dbReference type="PDBsum" id="5LZZ"/>
<dbReference type="PDBsum" id="6D90"/>
<dbReference type="PDBsum" id="6D9J"/>
<dbReference type="PDBsum" id="6FTG"/>
<dbReference type="PDBsum" id="6FTI"/>
<dbReference type="PDBsum" id="6FTJ"/>
<dbReference type="PDBsum" id="6HCF"/>
<dbReference type="PDBsum" id="6HCJ"/>
<dbReference type="PDBsum" id="6HCM"/>
<dbReference type="PDBsum" id="6HCQ"/>
<dbReference type="PDBsum" id="6MTB"/>
<dbReference type="PDBsum" id="6MTC"/>
<dbReference type="PDBsum" id="6MTD"/>
<dbReference type="PDBsum" id="6MTE"/>
<dbReference type="PDBsum" id="6P5I"/>
<dbReference type="PDBsum" id="6P5J"/>
<dbReference type="PDBsum" id="6P5K"/>
<dbReference type="PDBsum" id="6P5N"/>
<dbReference type="PDBsum" id="6R5Q"/>
<dbReference type="PDBsum" id="6R6G"/>
<dbReference type="PDBsum" id="6R6P"/>
<dbReference type="PDBsum" id="6R7Q"/>
<dbReference type="PDBsum" id="6SGC"/>
<dbReference type="PDBsum" id="6T59"/>
<dbReference type="PDBsum" id="6ZVK"/>
<dbReference type="PDBsum" id="7A01"/>
<dbReference type="PDBsum" id="7MDZ"/>
<dbReference type="PDBsum" id="7NFX"/>
<dbReference type="PDBsum" id="7NWG"/>
<dbReference type="PDBsum" id="7NWH"/>
<dbReference type="PDBsum" id="7NWI"/>
<dbReference type="PDBsum" id="7O7Y"/>
<dbReference type="PDBsum" id="7O7Z"/>
<dbReference type="PDBsum" id="7O80"/>
<dbReference type="PDBsum" id="7O81"/>
<dbReference type="PDBsum" id="7OBR"/>
<dbReference type="PDBsum" id="7OYD"/>
<dbReference type="PDBsum" id="7QWQ"/>
<dbReference type="PDBsum" id="7QWR"/>
<dbReference type="PDBsum" id="7QWS"/>
<dbReference type="PDBsum" id="7TM3"/>
<dbReference type="PDBsum" id="7TOQ"/>
<dbReference type="PDBsum" id="7TOR"/>
<dbReference type="PDBsum" id="7TUT"/>
<dbReference type="PDBsum" id="7UCJ"/>
<dbReference type="PDBsum" id="7UCK"/>
<dbReference type="PDBsum" id="7ZJW"/>
<dbReference type="PDBsum" id="7ZJX"/>
<dbReference type="PDBsum" id="8B5L"/>
<dbReference type="PDBsum" id="8B6C"/>
<dbReference type="PDBsum" id="8BHF"/>
<dbReference type="PDBsum" id="8BPO"/>
<dbReference type="PDBsum" id="8BTK"/>
<dbReference type="PDBsum" id="8P2K"/>
<dbReference type="PDBsum" id="8RJB"/>
<dbReference type="PDBsum" id="8RJC"/>
<dbReference type="PDBsum" id="8RJD"/>
<dbReference type="PDBsum" id="8SCB"/>
<dbReference type="PDBsum" id="8VFT"/>
<dbReference type="PDBsum" id="9BDL"/>
<dbReference type="PDBsum" id="9BDN"/>
<dbReference type="PDBsum" id="9BDP"/>
<dbReference type="PDBsum" id="9F1B"/>
<dbReference type="PDBsum" id="9F1C"/>
<dbReference type="PDBsum" id="9F1D"/>
<dbReference type="EMDB" id="EMD-0099"/>
<dbReference type="EMDB" id="EMD-0100"/>
<dbReference type="EMDB" id="EMD-0192"/>
<dbReference type="EMDB" id="EMD-0194"/>
<dbReference type="EMDB" id="EMD-0195"/>
<dbReference type="EMDB" id="EMD-0197"/>
<dbReference type="EMDB" id="EMD-10181"/>
<dbReference type="EMDB" id="EMD-10380"/>
<dbReference type="EMDB" id="EMD-11459"/>
<dbReference type="EMDB" id="EMD-11590"/>
<dbReference type="EMDB" id="EMD-12303"/>
<dbReference type="EMDB" id="EMD-12631"/>
<dbReference type="EMDB" id="EMD-12632"/>
<dbReference type="EMDB" id="EMD-12633"/>
<dbReference type="EMDB" id="EMD-12756"/>
<dbReference type="EMDB" id="EMD-12757"/>
<dbReference type="EMDB" id="EMD-12758"/>
<dbReference type="EMDB" id="EMD-12759"/>
<dbReference type="EMDB" id="EMD-12801"/>
<dbReference type="EMDB" id="EMD-13114"/>
<dbReference type="EMDB" id="EMD-14191"/>
<dbReference type="EMDB" id="EMD-14192"/>
<dbReference type="EMDB" id="EMD-14193"/>
<dbReference type="EMDB" id="EMD-14751"/>
<dbReference type="EMDB" id="EMD-14752"/>
<dbReference type="EMDB" id="EMD-15860"/>
<dbReference type="EMDB" id="EMD-15863"/>
<dbReference type="EMDB" id="EMD-16052"/>
<dbReference type="EMDB" id="EMD-16155"/>
<dbReference type="EMDB" id="EMD-16232"/>
<dbReference type="EMDB" id="EMD-17367"/>
<dbReference type="EMDB" id="EMD-19195"/>
<dbReference type="EMDB" id="EMD-19197"/>
<dbReference type="EMDB" id="EMD-19198"/>
<dbReference type="EMDB" id="EMD-20255"/>
<dbReference type="EMDB" id="EMD-20256"/>
<dbReference type="EMDB" id="EMD-20257"/>
<dbReference type="EMDB" id="EMD-20258"/>
<dbReference type="EMDB" id="EMD-23785"/>
<dbReference type="EMDB" id="EMD-25994"/>
<dbReference type="EMDB" id="EMD-26035"/>
<dbReference type="EMDB" id="EMD-26036"/>
<dbReference type="EMDB" id="EMD-26133"/>
<dbReference type="EMDB" id="EMD-26444"/>
<dbReference type="EMDB" id="EMD-26445"/>
<dbReference type="EMDB" id="EMD-40344"/>
<dbReference type="EMDB" id="EMD-4130"/>
<dbReference type="EMDB" id="EMD-4131"/>
<dbReference type="EMDB" id="EMD-4132"/>
<dbReference type="EMDB" id="EMD-4133"/>
<dbReference type="EMDB" id="EMD-4134"/>
<dbReference type="EMDB" id="EMD-4135"/>
<dbReference type="EMDB" id="EMD-4136"/>
<dbReference type="EMDB" id="EMD-4137"/>
<dbReference type="EMDB" id="EMD-4300"/>
<dbReference type="EMDB" id="EMD-4315"/>
<dbReference type="EMDB" id="EMD-4316"/>
<dbReference type="EMDB" id="EMD-4317"/>
<dbReference type="EMDB" id="EMD-43189"/>
<dbReference type="EMDB" id="EMD-44461"/>
<dbReference type="EMDB" id="EMD-44463"/>
<dbReference type="EMDB" id="EMD-44464"/>
<dbReference type="EMDB" id="EMD-4729"/>
<dbReference type="EMDB" id="EMD-4735"/>
<dbReference type="EMDB" id="EMD-4737"/>
<dbReference type="EMDB" id="EMD-4745"/>
<dbReference type="EMDB" id="EMD-50124"/>
<dbReference type="EMDB" id="EMD-50125"/>
<dbReference type="EMDB" id="EMD-50126"/>
<dbReference type="EMDB" id="EMD-7834"/>
<dbReference type="EMDB" id="EMD-7836"/>
<dbReference type="EMDB" id="EMD-9237"/>
<dbReference type="EMDB" id="EMD-9239"/>
<dbReference type="EMDB" id="EMD-9240"/>
<dbReference type="EMDB" id="EMD-9242"/>
<dbReference type="SMR" id="G1SZ12"/>
<dbReference type="IntAct" id="G1SZ12">
    <property type="interactions" value="1"/>
</dbReference>
<dbReference type="PaxDb" id="9986-ENSOCUP00000008883"/>
<dbReference type="Ensembl" id="ENSOCUT00000010309.3">
    <property type="protein sequence ID" value="ENSOCUP00000008883.2"/>
    <property type="gene ID" value="ENSOCUG00000010309.4"/>
</dbReference>
<dbReference type="GeneID" id="100339391"/>
<dbReference type="KEGG" id="ocu:100339391"/>
<dbReference type="CTD" id="9045"/>
<dbReference type="eggNOG" id="KOG3421">
    <property type="taxonomic scope" value="Eukaryota"/>
</dbReference>
<dbReference type="GeneTree" id="ENSGT00390000007888"/>
<dbReference type="OMA" id="HNYNESH"/>
<dbReference type="OrthoDB" id="1875589at2759"/>
<dbReference type="TreeFam" id="TF314356"/>
<dbReference type="Proteomes" id="UP000001811">
    <property type="component" value="Chromosome 9"/>
</dbReference>
<dbReference type="Bgee" id="ENSOCUG00000010309">
    <property type="expression patterns" value="Expressed in left lung and 15 other cell types or tissues"/>
</dbReference>
<dbReference type="ExpressionAtlas" id="G1SZ12">
    <property type="expression patterns" value="baseline"/>
</dbReference>
<dbReference type="GO" id="GO:0022625">
    <property type="term" value="C:cytosolic large ribosomal subunit"/>
    <property type="evidence" value="ECO:0007669"/>
    <property type="project" value="TreeGrafter"/>
</dbReference>
<dbReference type="GO" id="GO:0003723">
    <property type="term" value="F:RNA binding"/>
    <property type="evidence" value="ECO:0007669"/>
    <property type="project" value="InterPro"/>
</dbReference>
<dbReference type="GO" id="GO:0003735">
    <property type="term" value="F:structural constituent of ribosome"/>
    <property type="evidence" value="ECO:0007669"/>
    <property type="project" value="InterPro"/>
</dbReference>
<dbReference type="GO" id="GO:0042273">
    <property type="term" value="P:ribosomal large subunit biogenesis"/>
    <property type="evidence" value="ECO:0007669"/>
    <property type="project" value="TreeGrafter"/>
</dbReference>
<dbReference type="GO" id="GO:0006412">
    <property type="term" value="P:translation"/>
    <property type="evidence" value="ECO:0007669"/>
    <property type="project" value="InterPro"/>
</dbReference>
<dbReference type="CDD" id="cd23702">
    <property type="entry name" value="eL14"/>
    <property type="match status" value="1"/>
</dbReference>
<dbReference type="FunFam" id="2.30.30.30:FF:000022">
    <property type="entry name" value="60S ribosomal protein L14"/>
    <property type="match status" value="1"/>
</dbReference>
<dbReference type="Gene3D" id="2.30.30.30">
    <property type="match status" value="1"/>
</dbReference>
<dbReference type="Gene3D" id="6.10.250.2270">
    <property type="match status" value="1"/>
</dbReference>
<dbReference type="InterPro" id="IPR014722">
    <property type="entry name" value="Rib_uL2_dom2"/>
</dbReference>
<dbReference type="InterPro" id="IPR039660">
    <property type="entry name" value="Ribosomal_eL14"/>
</dbReference>
<dbReference type="InterPro" id="IPR002784">
    <property type="entry name" value="Ribosomal_eL14_dom"/>
</dbReference>
<dbReference type="InterPro" id="IPR008991">
    <property type="entry name" value="Translation_prot_SH3-like_sf"/>
</dbReference>
<dbReference type="PANTHER" id="PTHR11127">
    <property type="entry name" value="60S RIBOSOMAL PROTEIN L14"/>
    <property type="match status" value="1"/>
</dbReference>
<dbReference type="PANTHER" id="PTHR11127:SF2">
    <property type="entry name" value="LARGE RIBOSOMAL SUBUNIT PROTEIN EL14"/>
    <property type="match status" value="1"/>
</dbReference>
<dbReference type="Pfam" id="PF01929">
    <property type="entry name" value="Ribosomal_L14e"/>
    <property type="match status" value="1"/>
</dbReference>
<dbReference type="SUPFAM" id="SSF50104">
    <property type="entry name" value="Translation proteins SH3-like domain"/>
    <property type="match status" value="1"/>
</dbReference>